<name>YMGL_ECOLI</name>
<evidence type="ECO:0000269" key="1">
    <source>
    </source>
</evidence>
<evidence type="ECO:0000303" key="2">
    <source>
    </source>
</evidence>
<proteinExistence type="evidence at protein level"/>
<comment type="induction">
    <text evidence="1">Expressed approximately equally in exponential and stationary phases (at protein level).</text>
</comment>
<keyword id="KW-1185">Reference proteome</keyword>
<sequence>MEIKVQRLSLWMINTVFLLSPINNHQTNTINLIFEM</sequence>
<gene>
    <name evidence="2" type="primary">ymgL</name>
    <name type="ordered locus">b4739</name>
</gene>
<feature type="chain" id="PRO_0000445167" description="Protein YmgL">
    <location>
        <begin position="1"/>
        <end position="36"/>
    </location>
</feature>
<dbReference type="EMBL" id="U00096">
    <property type="protein sequence ID" value="AYC08195.1"/>
    <property type="molecule type" value="Genomic_DNA"/>
</dbReference>
<dbReference type="RefSeq" id="WP_032082692.1">
    <property type="nucleotide sequence ID" value="NZ_SSZK01000010.1"/>
</dbReference>
<dbReference type="EnsemblBacteria" id="AYC08195">
    <property type="protein sequence ID" value="AYC08195"/>
    <property type="gene ID" value="b4739"/>
</dbReference>
<dbReference type="KEGG" id="ecoc:C3026_06840"/>
<dbReference type="InParanoid" id="P0DPN9"/>
<dbReference type="BioCyc" id="EcoCyc:MONOMER0-4416"/>
<dbReference type="PRO" id="PR:P0DPN9"/>
<dbReference type="Proteomes" id="UP000000625">
    <property type="component" value="Chromosome"/>
</dbReference>
<dbReference type="Pfam" id="PF23691">
    <property type="entry name" value="YmgL"/>
    <property type="match status" value="1"/>
</dbReference>
<accession>P0DPN9</accession>
<accession>A0A385XJE8</accession>
<reference key="1">
    <citation type="journal article" date="1997" name="Science">
        <title>The complete genome sequence of Escherichia coli K-12.</title>
        <authorList>
            <person name="Blattner F.R."/>
            <person name="Plunkett G. III"/>
            <person name="Bloch C.A."/>
            <person name="Perna N.T."/>
            <person name="Burland V."/>
            <person name="Riley M."/>
            <person name="Collado-Vides J."/>
            <person name="Glasner J.D."/>
            <person name="Rode C.K."/>
            <person name="Mayhew G.F."/>
            <person name="Gregor J."/>
            <person name="Davis N.W."/>
            <person name="Kirkpatrick H.A."/>
            <person name="Goeden M.A."/>
            <person name="Rose D.J."/>
            <person name="Mau B."/>
            <person name="Shao Y."/>
        </authorList>
    </citation>
    <scope>NUCLEOTIDE SEQUENCE [LARGE SCALE GENOMIC DNA]</scope>
    <source>
        <strain>K12 / MG1655 / ATCC 47076</strain>
    </source>
</reference>
<reference key="2">
    <citation type="journal article" date="2018" name="Proteomics">
        <title>Identifying new small proteins in Escherichia coli.</title>
        <authorList>
            <person name="VanOrsdel C.E."/>
            <person name="Kelly J.P."/>
            <person name="Burke B.N."/>
            <person name="Lein C.D."/>
            <person name="Oufiero C.E."/>
            <person name="Sanchez J.F."/>
            <person name="Wimmers L.E."/>
            <person name="Hearn D.J."/>
            <person name="Abuikhdair F.J."/>
            <person name="Barnhart K.R."/>
            <person name="Duley M.L."/>
            <person name="Ernst S.E.G."/>
            <person name="Kenerson B.A."/>
            <person name="Serafin A.J."/>
            <person name="Hemm M.R."/>
        </authorList>
    </citation>
    <scope>IDENTIFICATION</scope>
    <scope>INDUCTION</scope>
</reference>
<protein>
    <recommendedName>
        <fullName evidence="2">Protein YmgL</fullName>
    </recommendedName>
</protein>
<organism>
    <name type="scientific">Escherichia coli (strain K12)</name>
    <dbReference type="NCBI Taxonomy" id="83333"/>
    <lineage>
        <taxon>Bacteria</taxon>
        <taxon>Pseudomonadati</taxon>
        <taxon>Pseudomonadota</taxon>
        <taxon>Gammaproteobacteria</taxon>
        <taxon>Enterobacterales</taxon>
        <taxon>Enterobacteriaceae</taxon>
        <taxon>Escherichia</taxon>
    </lineage>
</organism>